<protein>
    <recommendedName>
        <fullName evidence="1">Transcription antitermination protein NusB</fullName>
    </recommendedName>
    <alternativeName>
        <fullName evidence="1">Antitermination factor NusB</fullName>
    </alternativeName>
</protein>
<gene>
    <name evidence="1" type="primary">nusB</name>
    <name type="ordered locus">MS0975</name>
</gene>
<sequence length="143" mass="16368">MTEQVKKRPSPRRRARECAVQALYSFQISQNPVETVELSFVTDQDMKGVDMPYFRKLFRQTVENIPSVDSTMAPYLDRSANELDPIEKAILRLAVYELKYELDVPYKVVINEAIEVAKTFGAEDSHKYINGVLDKIAPALARK</sequence>
<evidence type="ECO:0000255" key="1">
    <source>
        <dbReference type="HAMAP-Rule" id="MF_00073"/>
    </source>
</evidence>
<comment type="function">
    <text evidence="1">Involved in transcription antitermination. Required for transcription of ribosomal RNA (rRNA) genes. Binds specifically to the boxA antiterminator sequence of the ribosomal RNA (rrn) operons.</text>
</comment>
<comment type="similarity">
    <text evidence="1">Belongs to the NusB family.</text>
</comment>
<reference key="1">
    <citation type="journal article" date="2004" name="Nat. Biotechnol.">
        <title>The genome sequence of the capnophilic rumen bacterium Mannheimia succiniciproducens.</title>
        <authorList>
            <person name="Hong S.H."/>
            <person name="Kim J.S."/>
            <person name="Lee S.Y."/>
            <person name="In Y.H."/>
            <person name="Choi S.S."/>
            <person name="Rih J.-K."/>
            <person name="Kim C.H."/>
            <person name="Jeong H."/>
            <person name="Hur C.G."/>
            <person name="Kim J.J."/>
        </authorList>
    </citation>
    <scope>NUCLEOTIDE SEQUENCE [LARGE SCALE GENOMIC DNA]</scope>
    <source>
        <strain>KCTC 0769BP / MBEL55E</strain>
    </source>
</reference>
<name>NUSB_MANSM</name>
<dbReference type="EMBL" id="AE016827">
    <property type="protein sequence ID" value="AAU37582.1"/>
    <property type="molecule type" value="Genomic_DNA"/>
</dbReference>
<dbReference type="RefSeq" id="WP_011200152.1">
    <property type="nucleotide sequence ID" value="NC_006300.1"/>
</dbReference>
<dbReference type="SMR" id="Q65TX8"/>
<dbReference type="STRING" id="221988.MS0975"/>
<dbReference type="KEGG" id="msu:MS0975"/>
<dbReference type="eggNOG" id="COG0781">
    <property type="taxonomic scope" value="Bacteria"/>
</dbReference>
<dbReference type="HOGENOM" id="CLU_087843_4_1_6"/>
<dbReference type="OrthoDB" id="9789556at2"/>
<dbReference type="Proteomes" id="UP000000607">
    <property type="component" value="Chromosome"/>
</dbReference>
<dbReference type="GO" id="GO:0005829">
    <property type="term" value="C:cytosol"/>
    <property type="evidence" value="ECO:0007669"/>
    <property type="project" value="TreeGrafter"/>
</dbReference>
<dbReference type="GO" id="GO:0003723">
    <property type="term" value="F:RNA binding"/>
    <property type="evidence" value="ECO:0007669"/>
    <property type="project" value="UniProtKB-UniRule"/>
</dbReference>
<dbReference type="GO" id="GO:0006353">
    <property type="term" value="P:DNA-templated transcription termination"/>
    <property type="evidence" value="ECO:0007669"/>
    <property type="project" value="UniProtKB-UniRule"/>
</dbReference>
<dbReference type="GO" id="GO:0031564">
    <property type="term" value="P:transcription antitermination"/>
    <property type="evidence" value="ECO:0007669"/>
    <property type="project" value="UniProtKB-KW"/>
</dbReference>
<dbReference type="CDD" id="cd00619">
    <property type="entry name" value="Terminator_NusB"/>
    <property type="match status" value="1"/>
</dbReference>
<dbReference type="FunFam" id="1.10.940.10:FF:000001">
    <property type="entry name" value="Transcription antitermination factor NusB"/>
    <property type="match status" value="1"/>
</dbReference>
<dbReference type="Gene3D" id="1.10.940.10">
    <property type="entry name" value="NusB-like"/>
    <property type="match status" value="1"/>
</dbReference>
<dbReference type="HAMAP" id="MF_00073">
    <property type="entry name" value="NusB"/>
    <property type="match status" value="1"/>
</dbReference>
<dbReference type="InterPro" id="IPR035926">
    <property type="entry name" value="NusB-like_sf"/>
</dbReference>
<dbReference type="InterPro" id="IPR011605">
    <property type="entry name" value="NusB_fam"/>
</dbReference>
<dbReference type="InterPro" id="IPR006027">
    <property type="entry name" value="NusB_RsmB_TIM44"/>
</dbReference>
<dbReference type="NCBIfam" id="TIGR01951">
    <property type="entry name" value="nusB"/>
    <property type="match status" value="1"/>
</dbReference>
<dbReference type="PANTHER" id="PTHR11078:SF3">
    <property type="entry name" value="ANTITERMINATION NUSB DOMAIN-CONTAINING PROTEIN"/>
    <property type="match status" value="1"/>
</dbReference>
<dbReference type="PANTHER" id="PTHR11078">
    <property type="entry name" value="N UTILIZATION SUBSTANCE PROTEIN B-RELATED"/>
    <property type="match status" value="1"/>
</dbReference>
<dbReference type="Pfam" id="PF01029">
    <property type="entry name" value="NusB"/>
    <property type="match status" value="1"/>
</dbReference>
<dbReference type="SUPFAM" id="SSF48013">
    <property type="entry name" value="NusB-like"/>
    <property type="match status" value="1"/>
</dbReference>
<organism>
    <name type="scientific">Mannheimia succiniciproducens (strain KCTC 0769BP / MBEL55E)</name>
    <dbReference type="NCBI Taxonomy" id="221988"/>
    <lineage>
        <taxon>Bacteria</taxon>
        <taxon>Pseudomonadati</taxon>
        <taxon>Pseudomonadota</taxon>
        <taxon>Gammaproteobacteria</taxon>
        <taxon>Pasteurellales</taxon>
        <taxon>Pasteurellaceae</taxon>
        <taxon>Basfia</taxon>
    </lineage>
</organism>
<feature type="chain" id="PRO_0000265540" description="Transcription antitermination protein NusB">
    <location>
        <begin position="1"/>
        <end position="143"/>
    </location>
</feature>
<proteinExistence type="inferred from homology"/>
<keyword id="KW-0694">RNA-binding</keyword>
<keyword id="KW-0804">Transcription</keyword>
<keyword id="KW-0889">Transcription antitermination</keyword>
<keyword id="KW-0805">Transcription regulation</keyword>
<accession>Q65TX8</accession>